<sequence length="336" mass="38529">MIEFVIPKKLKVEEEREEKDYYYARFSLSPLERGYAITIGNALRRVLLSSIPSLAIVGVRFIKPEKYHEYDYIEGVKEDILDIILNLKKVQFRVNVTVKGTIKMEVEKKGPGELVAGDIKTPAGIEVANPDLHIATLNSKADLFFEVYAEVGKGFVPVSEREERPDVGWIPIDGVFSPVIKVNFLTENVRVGKRTDYDKLILEIWTKKSIRPEEALRKAADILINHFKIVTEGLPELKISEEYIITSEEEEAEIPAVDHEEENRENLDVYNRKIDELELSVRSLNCLKRAKIETIGDLLSKTEEELLKIKNFGQKSLDEVKEKLKEKFGLELRKGE</sequence>
<protein>
    <recommendedName>
        <fullName evidence="1">DNA-directed RNA polymerase subunit alpha</fullName>
        <shortName evidence="1">RNAP subunit alpha</shortName>
        <ecNumber evidence="1">2.7.7.6</ecNumber>
    </recommendedName>
    <alternativeName>
        <fullName evidence="1">RNA polymerase subunit alpha</fullName>
    </alternativeName>
    <alternativeName>
        <fullName evidence="1">Transcriptase subunit alpha</fullName>
    </alternativeName>
</protein>
<accession>A5IMB1</accession>
<gene>
    <name evidence="1" type="primary">rpoA</name>
    <name type="ordered locus">Tpet_1320</name>
</gene>
<reference key="1">
    <citation type="submission" date="2007-05" db="EMBL/GenBank/DDBJ databases">
        <title>Complete sequence of Thermotoga petrophila RKU-1.</title>
        <authorList>
            <consortium name="US DOE Joint Genome Institute"/>
            <person name="Copeland A."/>
            <person name="Lucas S."/>
            <person name="Lapidus A."/>
            <person name="Barry K."/>
            <person name="Glavina del Rio T."/>
            <person name="Dalin E."/>
            <person name="Tice H."/>
            <person name="Pitluck S."/>
            <person name="Sims D."/>
            <person name="Brettin T."/>
            <person name="Bruce D."/>
            <person name="Detter J.C."/>
            <person name="Han C."/>
            <person name="Tapia R."/>
            <person name="Schmutz J."/>
            <person name="Larimer F."/>
            <person name="Land M."/>
            <person name="Hauser L."/>
            <person name="Kyrpides N."/>
            <person name="Mikhailova N."/>
            <person name="Nelson K."/>
            <person name="Gogarten J.P."/>
            <person name="Noll K."/>
            <person name="Richardson P."/>
        </authorList>
    </citation>
    <scope>NUCLEOTIDE SEQUENCE [LARGE SCALE GENOMIC DNA]</scope>
    <source>
        <strain>ATCC BAA-488 / DSM 13995 / JCM 10881 / RKU-1</strain>
    </source>
</reference>
<name>RPOA_THEP1</name>
<comment type="function">
    <text evidence="1">DNA-dependent RNA polymerase catalyzes the transcription of DNA into RNA using the four ribonucleoside triphosphates as substrates.</text>
</comment>
<comment type="catalytic activity">
    <reaction evidence="1">
        <text>RNA(n) + a ribonucleoside 5'-triphosphate = RNA(n+1) + diphosphate</text>
        <dbReference type="Rhea" id="RHEA:21248"/>
        <dbReference type="Rhea" id="RHEA-COMP:14527"/>
        <dbReference type="Rhea" id="RHEA-COMP:17342"/>
        <dbReference type="ChEBI" id="CHEBI:33019"/>
        <dbReference type="ChEBI" id="CHEBI:61557"/>
        <dbReference type="ChEBI" id="CHEBI:140395"/>
        <dbReference type="EC" id="2.7.7.6"/>
    </reaction>
</comment>
<comment type="subunit">
    <text evidence="1">Homodimer. The RNAP catalytic core consists of 2 alpha, 1 beta, 1 beta' and 1 omega subunit. When a sigma factor is associated with the core the holoenzyme is formed, which can initiate transcription.</text>
</comment>
<comment type="domain">
    <text evidence="1">The N-terminal domain is essential for RNAP assembly and basal transcription, whereas the C-terminal domain is involved in interaction with transcriptional regulators and with upstream promoter elements.</text>
</comment>
<comment type="similarity">
    <text evidence="1">Belongs to the RNA polymerase alpha chain family.</text>
</comment>
<evidence type="ECO:0000255" key="1">
    <source>
        <dbReference type="HAMAP-Rule" id="MF_00059"/>
    </source>
</evidence>
<organism>
    <name type="scientific">Thermotoga petrophila (strain ATCC BAA-488 / DSM 13995 / JCM 10881 / RKU-1)</name>
    <dbReference type="NCBI Taxonomy" id="390874"/>
    <lineage>
        <taxon>Bacteria</taxon>
        <taxon>Thermotogati</taxon>
        <taxon>Thermotogota</taxon>
        <taxon>Thermotogae</taxon>
        <taxon>Thermotogales</taxon>
        <taxon>Thermotogaceae</taxon>
        <taxon>Thermotoga</taxon>
    </lineage>
</organism>
<keyword id="KW-0240">DNA-directed RNA polymerase</keyword>
<keyword id="KW-0548">Nucleotidyltransferase</keyword>
<keyword id="KW-0804">Transcription</keyword>
<keyword id="KW-0808">Transferase</keyword>
<proteinExistence type="inferred from homology"/>
<feature type="chain" id="PRO_0000323662" description="DNA-directed RNA polymerase subunit alpha">
    <location>
        <begin position="1"/>
        <end position="336"/>
    </location>
</feature>
<feature type="region of interest" description="Alpha N-terminal domain (alpha-NTD)" evidence="1">
    <location>
        <begin position="1"/>
        <end position="234"/>
    </location>
</feature>
<feature type="region of interest" description="Alpha C-terminal domain (alpha-CTD)" evidence="1">
    <location>
        <begin position="269"/>
        <end position="336"/>
    </location>
</feature>
<dbReference type="EC" id="2.7.7.6" evidence="1"/>
<dbReference type="EMBL" id="CP000702">
    <property type="protein sequence ID" value="ABQ47334.1"/>
    <property type="molecule type" value="Genomic_DNA"/>
</dbReference>
<dbReference type="RefSeq" id="WP_011943802.1">
    <property type="nucleotide sequence ID" value="NC_009486.1"/>
</dbReference>
<dbReference type="SMR" id="A5IMB1"/>
<dbReference type="STRING" id="390874.Tpet_1320"/>
<dbReference type="KEGG" id="tpt:Tpet_1320"/>
<dbReference type="eggNOG" id="COG0202">
    <property type="taxonomic scope" value="Bacteria"/>
</dbReference>
<dbReference type="HOGENOM" id="CLU_053084_0_1_0"/>
<dbReference type="Proteomes" id="UP000006558">
    <property type="component" value="Chromosome"/>
</dbReference>
<dbReference type="GO" id="GO:0005737">
    <property type="term" value="C:cytoplasm"/>
    <property type="evidence" value="ECO:0007669"/>
    <property type="project" value="UniProtKB-ARBA"/>
</dbReference>
<dbReference type="GO" id="GO:0000428">
    <property type="term" value="C:DNA-directed RNA polymerase complex"/>
    <property type="evidence" value="ECO:0007669"/>
    <property type="project" value="UniProtKB-KW"/>
</dbReference>
<dbReference type="GO" id="GO:0003677">
    <property type="term" value="F:DNA binding"/>
    <property type="evidence" value="ECO:0007669"/>
    <property type="project" value="UniProtKB-UniRule"/>
</dbReference>
<dbReference type="GO" id="GO:0003899">
    <property type="term" value="F:DNA-directed RNA polymerase activity"/>
    <property type="evidence" value="ECO:0007669"/>
    <property type="project" value="UniProtKB-UniRule"/>
</dbReference>
<dbReference type="GO" id="GO:0046983">
    <property type="term" value="F:protein dimerization activity"/>
    <property type="evidence" value="ECO:0007669"/>
    <property type="project" value="InterPro"/>
</dbReference>
<dbReference type="GO" id="GO:0006351">
    <property type="term" value="P:DNA-templated transcription"/>
    <property type="evidence" value="ECO:0007669"/>
    <property type="project" value="UniProtKB-UniRule"/>
</dbReference>
<dbReference type="CDD" id="cd06928">
    <property type="entry name" value="RNAP_alpha_NTD"/>
    <property type="match status" value="1"/>
</dbReference>
<dbReference type="FunFam" id="2.170.120.12:FF:000001">
    <property type="entry name" value="DNA-directed RNA polymerase subunit alpha"/>
    <property type="match status" value="1"/>
</dbReference>
<dbReference type="Gene3D" id="1.10.150.20">
    <property type="entry name" value="5' to 3' exonuclease, C-terminal subdomain"/>
    <property type="match status" value="1"/>
</dbReference>
<dbReference type="Gene3D" id="2.170.120.12">
    <property type="entry name" value="DNA-directed RNA polymerase, insert domain"/>
    <property type="match status" value="1"/>
</dbReference>
<dbReference type="Gene3D" id="3.30.1360.10">
    <property type="entry name" value="RNA polymerase, RBP11-like subunit"/>
    <property type="match status" value="1"/>
</dbReference>
<dbReference type="HAMAP" id="MF_00059">
    <property type="entry name" value="RNApol_bact_RpoA"/>
    <property type="match status" value="1"/>
</dbReference>
<dbReference type="InterPro" id="IPR011262">
    <property type="entry name" value="DNA-dir_RNA_pol_insert"/>
</dbReference>
<dbReference type="InterPro" id="IPR011263">
    <property type="entry name" value="DNA-dir_RNA_pol_RpoA/D/Rpb3"/>
</dbReference>
<dbReference type="InterPro" id="IPR011773">
    <property type="entry name" value="DNA-dir_RpoA"/>
</dbReference>
<dbReference type="InterPro" id="IPR036603">
    <property type="entry name" value="RBP11-like"/>
</dbReference>
<dbReference type="InterPro" id="IPR011260">
    <property type="entry name" value="RNAP_asu_C"/>
</dbReference>
<dbReference type="InterPro" id="IPR036643">
    <property type="entry name" value="RNApol_insert_sf"/>
</dbReference>
<dbReference type="NCBIfam" id="NF003513">
    <property type="entry name" value="PRK05182.1-2"/>
    <property type="match status" value="1"/>
</dbReference>
<dbReference type="NCBIfam" id="NF003519">
    <property type="entry name" value="PRK05182.2-5"/>
    <property type="match status" value="1"/>
</dbReference>
<dbReference type="NCBIfam" id="TIGR02027">
    <property type="entry name" value="rpoA"/>
    <property type="match status" value="1"/>
</dbReference>
<dbReference type="Pfam" id="PF01000">
    <property type="entry name" value="RNA_pol_A_bac"/>
    <property type="match status" value="1"/>
</dbReference>
<dbReference type="Pfam" id="PF03118">
    <property type="entry name" value="RNA_pol_A_CTD"/>
    <property type="match status" value="1"/>
</dbReference>
<dbReference type="Pfam" id="PF01193">
    <property type="entry name" value="RNA_pol_L"/>
    <property type="match status" value="1"/>
</dbReference>
<dbReference type="SMART" id="SM00662">
    <property type="entry name" value="RPOLD"/>
    <property type="match status" value="1"/>
</dbReference>
<dbReference type="SUPFAM" id="SSF47789">
    <property type="entry name" value="C-terminal domain of RNA polymerase alpha subunit"/>
    <property type="match status" value="1"/>
</dbReference>
<dbReference type="SUPFAM" id="SSF56553">
    <property type="entry name" value="Insert subdomain of RNA polymerase alpha subunit"/>
    <property type="match status" value="1"/>
</dbReference>
<dbReference type="SUPFAM" id="SSF55257">
    <property type="entry name" value="RBP11-like subunits of RNA polymerase"/>
    <property type="match status" value="1"/>
</dbReference>